<name>UTP20_YEAST</name>
<comment type="function">
    <text evidence="2">Involved in nucleolar processing of pre-18S ribosomal RNA and ribosome assembly.</text>
</comment>
<comment type="subunit">
    <text evidence="2">Interacts with snoRNA U3. Interacts with MPP10. Component of the ribosomal small subunit (SSU) processome composed of at least 40 protein subunits and snoRNA U3.</text>
</comment>
<comment type="interaction">
    <interactant intactId="EBI-1871">
        <id>P35194</id>
    </interactant>
    <interactant intactId="EBI-16011">
        <id>Q05022</id>
        <label>RRP5</label>
    </interactant>
    <organismsDiffer>false</organismsDiffer>
    <experiments>3</experiments>
</comment>
<comment type="interaction">
    <interactant intactId="EBI-1871">
        <id>P35194</id>
    </interactant>
    <interactant intactId="EBI-1878">
        <id>P53254</id>
        <label>UTP22</label>
    </interactant>
    <organismsDiffer>false</organismsDiffer>
    <experiments>4</experiments>
</comment>
<comment type="subcellular location">
    <subcellularLocation>
        <location>Cytoplasm</location>
    </subcellularLocation>
    <subcellularLocation>
        <location>Nucleus</location>
        <location>Nucleolus</location>
    </subcellularLocation>
</comment>
<comment type="similarity">
    <text evidence="3">Belongs to the UTP20 family.</text>
</comment>
<organism>
    <name type="scientific">Saccharomyces cerevisiae (strain ATCC 204508 / S288c)</name>
    <name type="common">Baker's yeast</name>
    <dbReference type="NCBI Taxonomy" id="559292"/>
    <lineage>
        <taxon>Eukaryota</taxon>
        <taxon>Fungi</taxon>
        <taxon>Dikarya</taxon>
        <taxon>Ascomycota</taxon>
        <taxon>Saccharomycotina</taxon>
        <taxon>Saccharomycetes</taxon>
        <taxon>Saccharomycetales</taxon>
        <taxon>Saccharomycetaceae</taxon>
        <taxon>Saccharomyces</taxon>
    </lineage>
</organism>
<gene>
    <name type="primary">UTP20</name>
    <name type="ordered locus">YBL004W</name>
    <name type="ORF">YBL0101</name>
</gene>
<dbReference type="EMBL" id="Z35765">
    <property type="protein sequence ID" value="CAA84821.1"/>
    <property type="molecule type" value="Genomic_DNA"/>
</dbReference>
<dbReference type="EMBL" id="Z26494">
    <property type="protein sequence ID" value="CAA81266.1"/>
    <property type="molecule type" value="Genomic_DNA"/>
</dbReference>
<dbReference type="EMBL" id="BK006936">
    <property type="protein sequence ID" value="DAA07118.1"/>
    <property type="molecule type" value="Genomic_DNA"/>
</dbReference>
<dbReference type="PIR" id="S45734">
    <property type="entry name" value="S45734"/>
</dbReference>
<dbReference type="RefSeq" id="NP_009551.2">
    <property type="nucleotide sequence ID" value="NM_001178244.1"/>
</dbReference>
<dbReference type="PDB" id="6KE6">
    <property type="method" value="EM"/>
    <property type="resolution" value="3.40 A"/>
    <property type="chains" value="RP=1-2493"/>
</dbReference>
<dbReference type="PDB" id="6LQP">
    <property type="method" value="EM"/>
    <property type="resolution" value="3.20 A"/>
    <property type="chains" value="RP=1-2493"/>
</dbReference>
<dbReference type="PDB" id="6LQQ">
    <property type="method" value="EM"/>
    <property type="resolution" value="4.10 A"/>
    <property type="chains" value="RP=1-2493"/>
</dbReference>
<dbReference type="PDB" id="6LQR">
    <property type="method" value="EM"/>
    <property type="resolution" value="8.60 A"/>
    <property type="chains" value="RP=1-2493"/>
</dbReference>
<dbReference type="PDB" id="6LQS">
    <property type="method" value="EM"/>
    <property type="resolution" value="3.80 A"/>
    <property type="chains" value="RP=1-2493"/>
</dbReference>
<dbReference type="PDB" id="6LQT">
    <property type="method" value="EM"/>
    <property type="resolution" value="4.90 A"/>
    <property type="chains" value="RP=1-2493"/>
</dbReference>
<dbReference type="PDB" id="6LQU">
    <property type="method" value="EM"/>
    <property type="resolution" value="3.70 A"/>
    <property type="chains" value="RP=1-2493"/>
</dbReference>
<dbReference type="PDB" id="6LQV">
    <property type="method" value="EM"/>
    <property type="resolution" value="4.80 A"/>
    <property type="chains" value="RP=1-2493"/>
</dbReference>
<dbReference type="PDB" id="6ZQB">
    <property type="method" value="EM"/>
    <property type="resolution" value="3.90 A"/>
    <property type="chains" value="UT=1-2493"/>
</dbReference>
<dbReference type="PDB" id="6ZQC">
    <property type="method" value="EM"/>
    <property type="resolution" value="3.80 A"/>
    <property type="chains" value="UT=1-2493"/>
</dbReference>
<dbReference type="PDB" id="6ZQD">
    <property type="method" value="EM"/>
    <property type="resolution" value="3.80 A"/>
    <property type="chains" value="UT=1-2493"/>
</dbReference>
<dbReference type="PDB" id="6ZQE">
    <property type="method" value="EM"/>
    <property type="resolution" value="7.10 A"/>
    <property type="chains" value="UT=1-2493"/>
</dbReference>
<dbReference type="PDB" id="7AJT">
    <property type="method" value="EM"/>
    <property type="resolution" value="4.60 A"/>
    <property type="chains" value="UT=1-2493"/>
</dbReference>
<dbReference type="PDB" id="7AJU">
    <property type="method" value="EM"/>
    <property type="resolution" value="3.80 A"/>
    <property type="chains" value="UT=1-2493"/>
</dbReference>
<dbReference type="PDB" id="7D4I">
    <property type="method" value="EM"/>
    <property type="resolution" value="4.00 A"/>
    <property type="chains" value="RP=1-2493"/>
</dbReference>
<dbReference type="PDB" id="7D5T">
    <property type="method" value="EM"/>
    <property type="resolution" value="6.00 A"/>
    <property type="chains" value="RP=1-2493"/>
</dbReference>
<dbReference type="PDB" id="7D63">
    <property type="method" value="EM"/>
    <property type="resolution" value="12.30 A"/>
    <property type="chains" value="RP=1-2493"/>
</dbReference>
<dbReference type="PDB" id="7SUK">
    <property type="method" value="EM"/>
    <property type="resolution" value="3.99 A"/>
    <property type="chains" value="SP=4-2421"/>
</dbReference>
<dbReference type="PDBsum" id="6KE6"/>
<dbReference type="PDBsum" id="6LQP"/>
<dbReference type="PDBsum" id="6LQQ"/>
<dbReference type="PDBsum" id="6LQR"/>
<dbReference type="PDBsum" id="6LQS"/>
<dbReference type="PDBsum" id="6LQT"/>
<dbReference type="PDBsum" id="6LQU"/>
<dbReference type="PDBsum" id="6LQV"/>
<dbReference type="PDBsum" id="6ZQB"/>
<dbReference type="PDBsum" id="6ZQC"/>
<dbReference type="PDBsum" id="6ZQD"/>
<dbReference type="PDBsum" id="6ZQE"/>
<dbReference type="PDBsum" id="7AJT"/>
<dbReference type="PDBsum" id="7AJU"/>
<dbReference type="PDBsum" id="7D4I"/>
<dbReference type="PDBsum" id="7D5T"/>
<dbReference type="PDBsum" id="7D63"/>
<dbReference type="PDBsum" id="7SUK"/>
<dbReference type="EMDB" id="EMD-0949"/>
<dbReference type="EMDB" id="EMD-0950"/>
<dbReference type="EMDB" id="EMD-0951"/>
<dbReference type="EMDB" id="EMD-0952"/>
<dbReference type="EMDB" id="EMD-0953"/>
<dbReference type="EMDB" id="EMD-0954"/>
<dbReference type="EMDB" id="EMD-0955"/>
<dbReference type="EMDB" id="EMD-11358"/>
<dbReference type="EMDB" id="EMD-11359"/>
<dbReference type="EMDB" id="EMD-11360"/>
<dbReference type="EMDB" id="EMD-11361"/>
<dbReference type="EMDB" id="EMD-11807"/>
<dbReference type="EMDB" id="EMD-11808"/>
<dbReference type="EMDB" id="EMD-25441"/>
<dbReference type="EMDB" id="EMD-30574"/>
<dbReference type="EMDB" id="EMD-30585"/>
<dbReference type="EMDB" id="EMD-30588"/>
<dbReference type="EMDB" id="EMD-9964"/>
<dbReference type="SMR" id="P35194"/>
<dbReference type="BioGRID" id="32698">
    <property type="interactions" value="157"/>
</dbReference>
<dbReference type="ComplexPortal" id="CPX-1604">
    <property type="entry name" value="Small ribosomal subunit processome"/>
</dbReference>
<dbReference type="DIP" id="DIP-2826N"/>
<dbReference type="FunCoup" id="P35194">
    <property type="interactions" value="1253"/>
</dbReference>
<dbReference type="IntAct" id="P35194">
    <property type="interactions" value="91"/>
</dbReference>
<dbReference type="MINT" id="P35194"/>
<dbReference type="STRING" id="4932.YBL004W"/>
<dbReference type="GlyGen" id="P35194">
    <property type="glycosylation" value="1 site"/>
</dbReference>
<dbReference type="iPTMnet" id="P35194"/>
<dbReference type="PaxDb" id="4932-YBL004W"/>
<dbReference type="PeptideAtlas" id="P35194"/>
<dbReference type="EnsemblFungi" id="YBL004W_mRNA">
    <property type="protein sequence ID" value="YBL004W"/>
    <property type="gene ID" value="YBL004W"/>
</dbReference>
<dbReference type="GeneID" id="852282"/>
<dbReference type="KEGG" id="sce:YBL004W"/>
<dbReference type="AGR" id="SGD:S000000100"/>
<dbReference type="SGD" id="S000000100">
    <property type="gene designation" value="UTP20"/>
</dbReference>
<dbReference type="VEuPathDB" id="FungiDB:YBL004W"/>
<dbReference type="eggNOG" id="KOG1823">
    <property type="taxonomic scope" value="Eukaryota"/>
</dbReference>
<dbReference type="GeneTree" id="ENSGT00390000016813"/>
<dbReference type="HOGENOM" id="CLU_000327_0_0_1"/>
<dbReference type="InParanoid" id="P35194"/>
<dbReference type="OMA" id="EGLMAMF"/>
<dbReference type="OrthoDB" id="360653at2759"/>
<dbReference type="BioCyc" id="YEAST:G3O-28910-MONOMER"/>
<dbReference type="Reactome" id="R-SCE-6791226">
    <property type="pathway name" value="Major pathway of rRNA processing in the nucleolus and cytosol"/>
</dbReference>
<dbReference type="BioGRID-ORCS" id="852282">
    <property type="hits" value="0 hits in 10 CRISPR screens"/>
</dbReference>
<dbReference type="CD-CODE" id="BDAE0F88">
    <property type="entry name" value="Nucleolus"/>
</dbReference>
<dbReference type="PRO" id="PR:P35194"/>
<dbReference type="Proteomes" id="UP000002311">
    <property type="component" value="Chromosome II"/>
</dbReference>
<dbReference type="RNAct" id="P35194">
    <property type="molecule type" value="protein"/>
</dbReference>
<dbReference type="GO" id="GO:0030686">
    <property type="term" value="C:90S preribosome"/>
    <property type="evidence" value="ECO:0000314"/>
    <property type="project" value="SGD"/>
</dbReference>
<dbReference type="GO" id="GO:0005737">
    <property type="term" value="C:cytoplasm"/>
    <property type="evidence" value="ECO:0000314"/>
    <property type="project" value="SGD"/>
</dbReference>
<dbReference type="GO" id="GO:0005730">
    <property type="term" value="C:nucleolus"/>
    <property type="evidence" value="ECO:0000314"/>
    <property type="project" value="SGD"/>
</dbReference>
<dbReference type="GO" id="GO:0005654">
    <property type="term" value="C:nucleoplasm"/>
    <property type="evidence" value="ECO:0000314"/>
    <property type="project" value="SGD"/>
</dbReference>
<dbReference type="GO" id="GO:0030688">
    <property type="term" value="C:preribosome, small subunit precursor"/>
    <property type="evidence" value="ECO:0000314"/>
    <property type="project" value="SGD"/>
</dbReference>
<dbReference type="GO" id="GO:0032040">
    <property type="term" value="C:small-subunit processome"/>
    <property type="evidence" value="ECO:0000314"/>
    <property type="project" value="SGD"/>
</dbReference>
<dbReference type="GO" id="GO:0003729">
    <property type="term" value="F:mRNA binding"/>
    <property type="evidence" value="ECO:0007005"/>
    <property type="project" value="SGD"/>
</dbReference>
<dbReference type="GO" id="GO:0000480">
    <property type="term" value="P:endonucleolytic cleavage in 5'-ETS of tricistronic rRNA transcript (SSU-rRNA, 5.8S rRNA, LSU-rRNA)"/>
    <property type="evidence" value="ECO:0000315"/>
    <property type="project" value="SGD"/>
</dbReference>
<dbReference type="GO" id="GO:0000447">
    <property type="term" value="P:endonucleolytic cleavage in ITS1 to separate SSU-rRNA from 5.8S rRNA and LSU-rRNA from tricistronic rRNA transcript (SSU-rRNA, 5.8S rRNA, LSU-rRNA)"/>
    <property type="evidence" value="ECO:0000315"/>
    <property type="project" value="SGD"/>
</dbReference>
<dbReference type="GO" id="GO:0000472">
    <property type="term" value="P:endonucleolytic cleavage to generate mature 5'-end of SSU-rRNA from (SSU-rRNA, 5.8S rRNA, LSU-rRNA)"/>
    <property type="evidence" value="ECO:0000315"/>
    <property type="project" value="SGD"/>
</dbReference>
<dbReference type="GO" id="GO:0030490">
    <property type="term" value="P:maturation of SSU-rRNA"/>
    <property type="evidence" value="ECO:0000303"/>
    <property type="project" value="ComplexPortal"/>
</dbReference>
<dbReference type="Gene3D" id="1.25.10.10">
    <property type="entry name" value="Leucine-rich Repeat Variant"/>
    <property type="match status" value="3"/>
</dbReference>
<dbReference type="InterPro" id="IPR011989">
    <property type="entry name" value="ARM-like"/>
</dbReference>
<dbReference type="InterPro" id="IPR016024">
    <property type="entry name" value="ARM-type_fold"/>
</dbReference>
<dbReference type="InterPro" id="IPR052575">
    <property type="entry name" value="SSU_processome_comp_20"/>
</dbReference>
<dbReference type="InterPro" id="IPR046523">
    <property type="entry name" value="UTP20_C"/>
</dbReference>
<dbReference type="InterPro" id="IPR011430">
    <property type="entry name" value="UTP20_N"/>
</dbReference>
<dbReference type="PANTHER" id="PTHR17695">
    <property type="entry name" value="SMALL SUBUNIT PROCESSOME COMPONENT 20 HOMOLOG"/>
    <property type="match status" value="1"/>
</dbReference>
<dbReference type="PANTHER" id="PTHR17695:SF11">
    <property type="entry name" value="SMALL SUBUNIT PROCESSOME COMPONENT 20 HOMOLOG"/>
    <property type="match status" value="1"/>
</dbReference>
<dbReference type="Pfam" id="PF20416">
    <property type="entry name" value="UTP20"/>
    <property type="match status" value="1"/>
</dbReference>
<dbReference type="Pfam" id="PF23099">
    <property type="entry name" value="UTP20_C"/>
    <property type="match status" value="1"/>
</dbReference>
<dbReference type="Pfam" id="PF07539">
    <property type="entry name" value="UTP20_N"/>
    <property type="match status" value="1"/>
</dbReference>
<dbReference type="SUPFAM" id="SSF48371">
    <property type="entry name" value="ARM repeat"/>
    <property type="match status" value="4"/>
</dbReference>
<reference key="1">
    <citation type="journal article" date="1994" name="EMBO J.">
        <title>Complete DNA sequence of yeast chromosome II.</title>
        <authorList>
            <person name="Feldmann H."/>
            <person name="Aigle M."/>
            <person name="Aljinovic G."/>
            <person name="Andre B."/>
            <person name="Baclet M.C."/>
            <person name="Barthe C."/>
            <person name="Baur A."/>
            <person name="Becam A.-M."/>
            <person name="Biteau N."/>
            <person name="Boles E."/>
            <person name="Brandt T."/>
            <person name="Brendel M."/>
            <person name="Brueckner M."/>
            <person name="Bussereau F."/>
            <person name="Christiansen C."/>
            <person name="Contreras R."/>
            <person name="Crouzet M."/>
            <person name="Cziepluch C."/>
            <person name="Demolis N."/>
            <person name="Delaveau T."/>
            <person name="Doignon F."/>
            <person name="Domdey H."/>
            <person name="Duesterhus S."/>
            <person name="Dubois E."/>
            <person name="Dujon B."/>
            <person name="El Bakkoury M."/>
            <person name="Entian K.-D."/>
            <person name="Feuermann M."/>
            <person name="Fiers W."/>
            <person name="Fobo G.M."/>
            <person name="Fritz C."/>
            <person name="Gassenhuber J."/>
            <person name="Glansdorff N."/>
            <person name="Goffeau A."/>
            <person name="Grivell L.A."/>
            <person name="de Haan M."/>
            <person name="Hein C."/>
            <person name="Herbert C.J."/>
            <person name="Hollenberg C.P."/>
            <person name="Holmstroem K."/>
            <person name="Jacq C."/>
            <person name="Jacquet M."/>
            <person name="Jauniaux J.-C."/>
            <person name="Jonniaux J.-L."/>
            <person name="Kallesoee T."/>
            <person name="Kiesau P."/>
            <person name="Kirchrath L."/>
            <person name="Koetter P."/>
            <person name="Korol S."/>
            <person name="Liebl S."/>
            <person name="Logghe M."/>
            <person name="Lohan A.J.E."/>
            <person name="Louis E.J."/>
            <person name="Li Z.Y."/>
            <person name="Maat M.J."/>
            <person name="Mallet L."/>
            <person name="Mannhaupt G."/>
            <person name="Messenguy F."/>
            <person name="Miosga T."/>
            <person name="Molemans F."/>
            <person name="Mueller S."/>
            <person name="Nasr F."/>
            <person name="Obermaier B."/>
            <person name="Perea J."/>
            <person name="Pierard A."/>
            <person name="Piravandi E."/>
            <person name="Pohl F.M."/>
            <person name="Pohl T.M."/>
            <person name="Potier S."/>
            <person name="Proft M."/>
            <person name="Purnelle B."/>
            <person name="Ramezani Rad M."/>
            <person name="Rieger M."/>
            <person name="Rose M."/>
            <person name="Schaaff-Gerstenschlaeger I."/>
            <person name="Scherens B."/>
            <person name="Schwarzlose C."/>
            <person name="Skala J."/>
            <person name="Slonimski P.P."/>
            <person name="Smits P.H.M."/>
            <person name="Souciet J.-L."/>
            <person name="Steensma H.Y."/>
            <person name="Stucka R."/>
            <person name="Urrestarazu L.A."/>
            <person name="van der Aart Q.J.M."/>
            <person name="Van Dyck L."/>
            <person name="Vassarotti A."/>
            <person name="Vetter I."/>
            <person name="Vierendeels F."/>
            <person name="Vissers S."/>
            <person name="Wagner G."/>
            <person name="de Wergifosse P."/>
            <person name="Wolfe K.H."/>
            <person name="Zagulski M."/>
            <person name="Zimmermann F.K."/>
            <person name="Mewes H.-W."/>
            <person name="Kleine K."/>
        </authorList>
    </citation>
    <scope>NUCLEOTIDE SEQUENCE [LARGE SCALE GENOMIC DNA]</scope>
    <source>
        <strain>ATCC 204508 / S288c</strain>
    </source>
</reference>
<reference key="2">
    <citation type="journal article" date="2014" name="G3 (Bethesda)">
        <title>The reference genome sequence of Saccharomyces cerevisiae: Then and now.</title>
        <authorList>
            <person name="Engel S.R."/>
            <person name="Dietrich F.S."/>
            <person name="Fisk D.G."/>
            <person name="Binkley G."/>
            <person name="Balakrishnan R."/>
            <person name="Costanzo M.C."/>
            <person name="Dwight S.S."/>
            <person name="Hitz B.C."/>
            <person name="Karra K."/>
            <person name="Nash R.S."/>
            <person name="Weng S."/>
            <person name="Wong E.D."/>
            <person name="Lloyd P."/>
            <person name="Skrzypek M.S."/>
            <person name="Miyasato S.R."/>
            <person name="Simison M."/>
            <person name="Cherry J.M."/>
        </authorList>
    </citation>
    <scope>GENOME REANNOTATION</scope>
    <source>
        <strain>ATCC 204508 / S288c</strain>
    </source>
</reference>
<reference key="3">
    <citation type="journal article" date="1994" name="Yeast">
        <title>Sequence around the centromere of Saccharomyces cerevisiae chromosome II: similarity of CEN2 to CEN4.</title>
        <authorList>
            <person name="Wolfe K.H."/>
            <person name="Lohan A.J.E."/>
        </authorList>
    </citation>
    <scope>NUCLEOTIDE SEQUENCE [GENOMIC DNA] OF 1214-2493</scope>
    <source>
        <strain>ATCC 204508 / S288c</strain>
    </source>
</reference>
<reference key="4">
    <citation type="journal article" date="2003" name="Nature">
        <title>Global analysis of protein localization in budding yeast.</title>
        <authorList>
            <person name="Huh W.-K."/>
            <person name="Falvo J.V."/>
            <person name="Gerke L.C."/>
            <person name="Carroll A.S."/>
            <person name="Howson R.W."/>
            <person name="Weissman J.S."/>
            <person name="O'Shea E.K."/>
        </authorList>
    </citation>
    <scope>SUBCELLULAR LOCATION [LARGE SCALE ANALYSIS]</scope>
</reference>
<reference key="5">
    <citation type="journal article" date="2004" name="Eukaryot. Cell">
        <title>The small-subunit processome is a ribosome assembly intermediate.</title>
        <authorList>
            <person name="Bernstein K.A."/>
            <person name="Gallagher J.E.G."/>
            <person name="Mitchell B.M."/>
            <person name="Granneman S."/>
            <person name="Baserga S.J."/>
        </authorList>
    </citation>
    <scope>FUNCTION</scope>
    <scope>INTERACTION WITH MPP10 AND SNORNA U3</scope>
    <scope>IDENTIFICATION IN SSU PROCESSOME</scope>
    <scope>SUBCELLULAR LOCATION</scope>
</reference>
<protein>
    <recommendedName>
        <fullName>U3 small nucleolar RNA-associated protein 20</fullName>
        <shortName>U3 snoRNA-associated protein 20</shortName>
    </recommendedName>
    <alternativeName>
        <fullName>U three protein 20</fullName>
    </alternativeName>
</protein>
<proteinExistence type="evidence at protein level"/>
<evidence type="ECO:0000256" key="1">
    <source>
        <dbReference type="SAM" id="MobiDB-lite"/>
    </source>
</evidence>
<evidence type="ECO:0000269" key="2">
    <source>
    </source>
</evidence>
<evidence type="ECO:0000305" key="3"/>
<keyword id="KW-0002">3D-structure</keyword>
<keyword id="KW-0963">Cytoplasm</keyword>
<keyword id="KW-0539">Nucleus</keyword>
<keyword id="KW-1185">Reference proteome</keyword>
<keyword id="KW-0677">Repeat</keyword>
<keyword id="KW-0687">Ribonucleoprotein</keyword>
<keyword id="KW-0690">Ribosome biogenesis</keyword>
<keyword id="KW-0698">rRNA processing</keyword>
<sequence>MAKQRQTTKSSKRYRYSSFKARIDDLKIEPARNLEKRVHDYVESSHFLASFDQWKEINLSAKFTEFAAEIEHDVQTLPQILYHDKKIFNSLVSFINFHDEFSLQPLLDLLAQFCHDLGPDFLKFYEEAIKTLINLLDAAIEFESSNVFEWGFNCLAYIFKYLSKFLVKKLVLTCDLLIPLLSHSKEYLSRFSAEALSFLVRKCPVSNLREFVRSVFEKLEGDDEQTNLYEGLLILFTESMTSTQETLHSKAKAIMSVLLHEALTKSSPERSVSLLSDIWMNISKYASIESLLPVYEVMYQDFNDSLDATNIDRILKVLTTIVFSESGRKIPDWNKITILIERIMSQSENCASLSQDKVAFLFALFIRNSDVKTLTLFHQKLFNYALTNISDCFLEFFQFALRLSYERVFSFNGLKFLQLFLKKNWQSQGKKIALFFLEVDDKPELQKVREVNFPEEFILSIRDFFVTAEINDSNDLFEIYWRAIIFKYSKLQNTEIIIPLLERIFSTFASPDNFTKDMVGTLLKIYRKEDDASGNNLLKTILDNYENYKESLNFLRGWNKLVSNLHPSESLKGLMSHYPSLLLSLTDNFMLPDGKIRYETLELMKTLMILQGMQVPDLLSSCMVIEEIPLTLQNARDLTIRIKNVGAEFGKTKTDKLVSSFFLKYLFGLLTVRFSPVWTGVFDTLPNVYTKDEALVWKLVLSFIKLPDENQNLDYYQPLLEDGANKVLWDSSVVRLRDTIDTFSHIWSKYSTQNTSIISTTIERRGNTTYPILIRNQALKVMLSIPQVAENHFVDIAPFVYNDFKTYKDEEDMENERVITGSWTEVDRNVFLKTLSKFKNIKNVYSATELHDHLMVLLGSRNTDVQKLALDALLAYKNPTLNKYRDNLKNLLDDTLFKDEITTFLTENGSQSIKAEDEKVVMPYVLRIFFGRAQVPPTSGQKRSRKIAVISVLPNFKKPYINDFLSLASERLDYNYFFGNSHQINSSKATLKTIRRMTGFVNIVNSTLSVLRTNFPLHTNSVLQPLIYSIAMAYYVLDTESTEEVHLRKMASNLRQQGLKCLSSVFEFVGNTFDWSTSMEDIYAVVVKPRISHFSDENLQQPSSLLRLFLYWAHNPSLYQFLYYDEFATATALMDTISNQHVKEAVIGPIIEAADSIIRNPVNDDHYVDLVTLICTSCLKILPSLYVKLSDSNSISTFLNLLVSITEMGFIQDDHVRSRLISSLISILKGKLKKLQENDTQKILKILKLIVFNYNCSWSDIEELYTTISSLFKTFDERNLRVSLTELFIELGRKVPELESISKLVADLNSYSSSRMHEYDFPRILSTFKGLIEDGYKSYSELEWLPLLFTFLHFINNKEELALRTNASHAIMKFIDFINEKPNLNEASKSISMLKDILLPNIRIGLRDSLEEVQSEYVSVLSYMVKNTKYFTDFEDMAILLYNGDEEADFFTNVNHIQLHRRQRAIKRLGEHAHQLKDNSISHYLIPMIEHYVFSDDERYRNIGNETQIAIGGLAQHMSWNQYKALLRRYISMLKTKPNQMKQAVQLIVQLSVPLRETLRIVRDGAESKLTLSKFPSNLDEPSNFIKQELYPTLSKILGTRDDETIIERMPIAEALVNIVLGLTNDDITNFLPSILTNICQVLRSKSEELRDAVRVTLGKISIILGAEYLVFVIKELMATLKRGSQIHVLSYTVHYILKSMHGVLKHSDLDTSSSMIVKIIMENIFGFAGEEKDSENYHTKVKEIKSNKSYDAGEILASNISLTEFGTLLSPVKALLMVRINLRNQNKLSELLRRYLLGLNHNSDSESESILKFCHQLFQESEMSNSPQIPKKKVKDQVDEKEDFFLVNLESKSYTINSNSLLLNSTLQKFALDLLRNVITRHRSFLTVSHLEGFIPFLRDSLLSENEGVVISTLRILITLIRLDFSDESSEIFKNCARKVLNIIKVSPSTSSELCQMGLKFLSAFIRHTDSTLKDTALSYVLGRVLPDLNEPSRQGLAFNFLKALVSKHIMLPELYDIADTTREIMVTNHSKEIRDVSRSVYYQFLMEYDQSKGRLEKQFKFMVDNLQYPTESGRQSVMELINLIITKANPALLSKLSSSFFLALVNVSFNDDAPRCREMASVLISTMLPKLENKDLEIVEKYIAAWLKQVDNASFLNLGLRTYKVYLKSIGFEHTIELDELAIKRIRYILSDTSVGSEHQWDLVYSALNTFSSYMEATESVYKHGFKDIWDGIITCLLYPHSWVRQSAANLVHQLIANKDKLEISLTNLEIQTIATRILHQLGAPSIPENLANVSIKTLVNISILWKEQRTPFIMDVSKQTGEDLKYTTAIDYMVTRIGGIIRSDEHRMDSFMSKKACIQLLALLVQVLDEDEVIAEGEKILLPLYGYLETYYSRAVDEEQEELRTLSNECLKILEDKLQVSDFTKIYTAVKQTVLERRKERRSKRAILAVNAPQISADKKLRKHARSREKRKHEKDENGYYQRRNKRKRA</sequence>
<feature type="chain" id="PRO_0000202465" description="U3 small nucleolar RNA-associated protein 20">
    <location>
        <begin position="1"/>
        <end position="2493"/>
    </location>
</feature>
<feature type="repeat" description="HEAT 1">
    <location>
        <begin position="227"/>
        <end position="264"/>
    </location>
</feature>
<feature type="repeat" description="HEAT 2">
    <location>
        <begin position="495"/>
        <end position="532"/>
    </location>
</feature>
<feature type="repeat" description="HEAT 3">
    <location>
        <begin position="576"/>
        <end position="613"/>
    </location>
</feature>
<feature type="repeat" description="HEAT 4">
    <location>
        <begin position="845"/>
        <end position="882"/>
    </location>
</feature>
<feature type="repeat" description="HEAT 5">
    <location>
        <begin position="1176"/>
        <end position="1214"/>
    </location>
</feature>
<feature type="repeat" description="HEAT 6">
    <location>
        <begin position="1216"/>
        <end position="1252"/>
    </location>
</feature>
<feature type="repeat" description="HEAT 7">
    <location>
        <begin position="1342"/>
        <end position="1380"/>
    </location>
</feature>
<feature type="repeat" description="HEAT 8">
    <location>
        <begin position="1393"/>
        <end position="1430"/>
    </location>
</feature>
<feature type="repeat" description="HEAT 9">
    <location>
        <begin position="1480"/>
        <end position="1520"/>
    </location>
</feature>
<feature type="repeat" description="HEAT 10">
    <location>
        <begin position="1522"/>
        <end position="1558"/>
    </location>
</feature>
<feature type="repeat" description="HEAT 11">
    <location>
        <begin position="1588"/>
        <end position="1625"/>
    </location>
</feature>
<feature type="repeat" description="HEAT 12">
    <location>
        <begin position="1630"/>
        <end position="1667"/>
    </location>
</feature>
<feature type="repeat" description="HEAT 13">
    <location>
        <begin position="1890"/>
        <end position="1927"/>
    </location>
</feature>
<feature type="repeat" description="HEAT 14">
    <location>
        <begin position="1953"/>
        <end position="1992"/>
    </location>
</feature>
<feature type="repeat" description="HEAT 15">
    <location>
        <begin position="2120"/>
        <end position="2157"/>
    </location>
</feature>
<feature type="repeat" description="HEAT 16">
    <location>
        <begin position="2358"/>
        <end position="2397"/>
    </location>
</feature>
<feature type="region of interest" description="Disordered" evidence="1">
    <location>
        <begin position="2457"/>
        <end position="2493"/>
    </location>
</feature>
<feature type="compositionally biased region" description="Basic residues" evidence="1">
    <location>
        <begin position="2463"/>
        <end position="2476"/>
    </location>
</feature>
<feature type="sequence conflict" description="In Ref. 3; CAA81266." evidence="3" ref="3">
    <original>R</original>
    <variation>S</variation>
    <location>
        <position position="2440"/>
    </location>
</feature>
<accession>P35194</accession>
<accession>D6VPZ8</accession>